<organism>
    <name type="scientific">Yarrowia lipolytica (strain CLIB 122 / E 150)</name>
    <name type="common">Yeast</name>
    <name type="synonym">Candida lipolytica</name>
    <dbReference type="NCBI Taxonomy" id="284591"/>
    <lineage>
        <taxon>Eukaryota</taxon>
        <taxon>Fungi</taxon>
        <taxon>Dikarya</taxon>
        <taxon>Ascomycota</taxon>
        <taxon>Saccharomycotina</taxon>
        <taxon>Dipodascomycetes</taxon>
        <taxon>Dipodascales</taxon>
        <taxon>Dipodascales incertae sedis</taxon>
        <taxon>Yarrowia</taxon>
    </lineage>
</organism>
<evidence type="ECO:0000250" key="1">
    <source>
        <dbReference type="UniProtKB" id="A0A4P9I8G4"/>
    </source>
</evidence>
<evidence type="ECO:0000250" key="2">
    <source>
        <dbReference type="UniProtKB" id="J9VHN6"/>
    </source>
</evidence>
<evidence type="ECO:0000255" key="3"/>
<evidence type="ECO:0000255" key="4">
    <source>
        <dbReference type="PROSITE-ProRule" id="PRU00498"/>
    </source>
</evidence>
<evidence type="ECO:0000256" key="5">
    <source>
        <dbReference type="SAM" id="MobiDB-lite"/>
    </source>
</evidence>
<evidence type="ECO:0000269" key="6">
    <source>
    </source>
</evidence>
<evidence type="ECO:0000303" key="7">
    <source>
    </source>
</evidence>
<evidence type="ECO:0000305" key="8"/>
<evidence type="ECO:0000305" key="9">
    <source>
    </source>
</evidence>
<dbReference type="EMBL" id="CR382132">
    <property type="protein sequence ID" value="CAG78632.1"/>
    <property type="molecule type" value="Genomic_DNA"/>
</dbReference>
<dbReference type="RefSeq" id="XP_505821.1">
    <property type="nucleotide sequence ID" value="XM_505821.1"/>
</dbReference>
<dbReference type="SMR" id="Q6C0J1"/>
<dbReference type="EnsemblFungi" id="CAG78632">
    <property type="protein sequence ID" value="CAG78632"/>
    <property type="gene ID" value="YALI0_F24255g"/>
</dbReference>
<dbReference type="KEGG" id="yli:2908720"/>
<dbReference type="VEuPathDB" id="FungiDB:YALI0_F24255g"/>
<dbReference type="HOGENOM" id="CLU_070647_2_0_1"/>
<dbReference type="InParanoid" id="Q6C0J1"/>
<dbReference type="OMA" id="FCFHANA"/>
<dbReference type="OrthoDB" id="121006at4891"/>
<dbReference type="Proteomes" id="UP000001300">
    <property type="component" value="Chromosome F"/>
</dbReference>
<dbReference type="GO" id="GO:0005886">
    <property type="term" value="C:plasma membrane"/>
    <property type="evidence" value="ECO:0007669"/>
    <property type="project" value="UniProtKB-SubCell"/>
</dbReference>
<dbReference type="GO" id="GO:0098552">
    <property type="term" value="C:side of membrane"/>
    <property type="evidence" value="ECO:0007669"/>
    <property type="project" value="UniProtKB-KW"/>
</dbReference>
<dbReference type="GO" id="GO:0046872">
    <property type="term" value="F:metal ion binding"/>
    <property type="evidence" value="ECO:0007669"/>
    <property type="project" value="UniProtKB-KW"/>
</dbReference>
<dbReference type="CDD" id="cd21176">
    <property type="entry name" value="LPMO_auxiliary-like"/>
    <property type="match status" value="1"/>
</dbReference>
<dbReference type="InterPro" id="IPR046936">
    <property type="entry name" value="BIM1-like"/>
</dbReference>
<dbReference type="InterPro" id="IPR046530">
    <property type="entry name" value="BIM1-like_dom"/>
</dbReference>
<dbReference type="PANTHER" id="PTHR34992:SF1">
    <property type="entry name" value="COPPER ACQUISITION FACTOR BIM1-LIKE DOMAIN-CONTAINING PROTEIN"/>
    <property type="match status" value="1"/>
</dbReference>
<dbReference type="PANTHER" id="PTHR34992">
    <property type="entry name" value="HYPHAL ANASTAMOSIS-7 PROTEIN"/>
    <property type="match status" value="1"/>
</dbReference>
<dbReference type="Pfam" id="PF20238">
    <property type="entry name" value="BIM1-like_dom"/>
    <property type="match status" value="1"/>
</dbReference>
<sequence>MQLSALALATLLATANAHFTVYYPGWRGDSHPTQTQGPCGGLNKIGERFKVNGKSVDVLLKTSHTSAITEYRLCLGDDCGTKSGSDGQKDFSKVLYGPINELGAGNFCMPGLPLGDLKDGQKGTIQVIMQAVDGNLYNCIDFEVDNSVDAFNAVCKNSTGVSAEAISNANAGSLAENTQGSGNSSGHAHGSSGSGSASASKTDSKSSAASGSASATSAAASSAASSAAASASATEEKNSGSLAYVNGALAIGGVVAAALLI</sequence>
<comment type="function">
    <text evidence="2 6">Lytic polysaccharide monooxygenase-like protein that has diverged to biological functions other than polysaccharide degradation since it does not perform oxidative cleavage of polysaccharides (PubMed:31932718). Acts as a cell surface-bound protein that functions in the copper-accumulation pathway (By similarity).</text>
</comment>
<comment type="cofactor">
    <cofactor evidence="6">
        <name>Cu(2+)</name>
        <dbReference type="ChEBI" id="CHEBI:29036"/>
    </cofactor>
    <text evidence="6">Binds 1 copper ion per subunit.</text>
</comment>
<comment type="subcellular location">
    <subcellularLocation>
        <location evidence="3">Cell membrane</location>
        <topology evidence="3">Lipid-anchor</topology>
        <topology evidence="3">GPI-anchor</topology>
    </subcellularLocation>
    <text evidence="9">Proteins attached to a GPI anchor via their C terminus are found in the outer leaflet of the lipid bilayer facing the extracellular environment. GPI anchors can also be considered as predetermined breaking points, which allow the release of proteins into the extracellular environment upon enzymatic cleavage.</text>
</comment>
<comment type="similarity">
    <text evidence="8">Belongs to the X325 family.</text>
</comment>
<protein>
    <recommendedName>
        <fullName evidence="7">Lytic polysaccharide monooxygenase-like protein X325</fullName>
        <shortName evidence="7">LPMO-like protein X325</shortName>
    </recommendedName>
    <alternativeName>
        <fullName evidence="7">X325 family protein</fullName>
    </alternativeName>
</protein>
<reference key="1">
    <citation type="journal article" date="2004" name="Nature">
        <title>Genome evolution in yeasts.</title>
        <authorList>
            <person name="Dujon B."/>
            <person name="Sherman D."/>
            <person name="Fischer G."/>
            <person name="Durrens P."/>
            <person name="Casaregola S."/>
            <person name="Lafontaine I."/>
            <person name="de Montigny J."/>
            <person name="Marck C."/>
            <person name="Neuveglise C."/>
            <person name="Talla E."/>
            <person name="Goffard N."/>
            <person name="Frangeul L."/>
            <person name="Aigle M."/>
            <person name="Anthouard V."/>
            <person name="Babour A."/>
            <person name="Barbe V."/>
            <person name="Barnay S."/>
            <person name="Blanchin S."/>
            <person name="Beckerich J.-M."/>
            <person name="Beyne E."/>
            <person name="Bleykasten C."/>
            <person name="Boisrame A."/>
            <person name="Boyer J."/>
            <person name="Cattolico L."/>
            <person name="Confanioleri F."/>
            <person name="de Daruvar A."/>
            <person name="Despons L."/>
            <person name="Fabre E."/>
            <person name="Fairhead C."/>
            <person name="Ferry-Dumazet H."/>
            <person name="Groppi A."/>
            <person name="Hantraye F."/>
            <person name="Hennequin C."/>
            <person name="Jauniaux N."/>
            <person name="Joyet P."/>
            <person name="Kachouri R."/>
            <person name="Kerrest A."/>
            <person name="Koszul R."/>
            <person name="Lemaire M."/>
            <person name="Lesur I."/>
            <person name="Ma L."/>
            <person name="Muller H."/>
            <person name="Nicaud J.-M."/>
            <person name="Nikolski M."/>
            <person name="Oztas S."/>
            <person name="Ozier-Kalogeropoulos O."/>
            <person name="Pellenz S."/>
            <person name="Potier S."/>
            <person name="Richard G.-F."/>
            <person name="Straub M.-L."/>
            <person name="Suleau A."/>
            <person name="Swennen D."/>
            <person name="Tekaia F."/>
            <person name="Wesolowski-Louvel M."/>
            <person name="Westhof E."/>
            <person name="Wirth B."/>
            <person name="Zeniou-Meyer M."/>
            <person name="Zivanovic Y."/>
            <person name="Bolotin-Fukuhara M."/>
            <person name="Thierry A."/>
            <person name="Bouchier C."/>
            <person name="Caudron B."/>
            <person name="Scarpelli C."/>
            <person name="Gaillardin C."/>
            <person name="Weissenbach J."/>
            <person name="Wincker P."/>
            <person name="Souciet J.-L."/>
        </authorList>
    </citation>
    <scope>NUCLEOTIDE SEQUENCE [LARGE SCALE GENOMIC DNA]</scope>
    <source>
        <strain>CLIB 122 / E 150</strain>
    </source>
</reference>
<reference key="2">
    <citation type="journal article" date="2020" name="Nat. Chem. Biol.">
        <title>A fungal family of lytic polysaccharide monooxygenase-like copper proteins.</title>
        <authorList>
            <person name="Labourel A."/>
            <person name="Frandsen K.E.H."/>
            <person name="Zhang F."/>
            <person name="Brouilly N."/>
            <person name="Grisel S."/>
            <person name="Haon M."/>
            <person name="Ciano L."/>
            <person name="Ropartz D."/>
            <person name="Fanuel M."/>
            <person name="Martin F."/>
            <person name="Navarro D."/>
            <person name="Rosso M.N."/>
            <person name="Tandrup T."/>
            <person name="Bissaro B."/>
            <person name="Johansen K.S."/>
            <person name="Zerva A."/>
            <person name="Walton P.H."/>
            <person name="Henrissat B."/>
            <person name="Leggio L.L."/>
            <person name="Berrin J.G."/>
        </authorList>
    </citation>
    <scope>IDENTIFICATION BY MASS SPECTROMETRY</scope>
    <scope>FUNCTION</scope>
    <scope>COFACTOR</scope>
</reference>
<feature type="signal peptide" evidence="3">
    <location>
        <begin position="1"/>
        <end position="17"/>
    </location>
</feature>
<feature type="chain" id="PRO_5004271218" description="Lytic polysaccharide monooxygenase-like protein X325" evidence="3">
    <location>
        <begin position="18"/>
        <end position="238"/>
    </location>
</feature>
<feature type="propeptide" id="PRO_0000459764" description="Removed in mature form" evidence="3">
    <location>
        <begin position="239"/>
        <end position="261"/>
    </location>
</feature>
<feature type="region of interest" description="Disordered" evidence="5">
    <location>
        <begin position="174"/>
        <end position="210"/>
    </location>
</feature>
<feature type="compositionally biased region" description="Low complexity" evidence="5">
    <location>
        <begin position="180"/>
        <end position="210"/>
    </location>
</feature>
<feature type="binding site" evidence="1">
    <location>
        <position position="18"/>
    </location>
    <ligand>
        <name>Cu(2+)</name>
        <dbReference type="ChEBI" id="CHEBI:29036"/>
    </ligand>
</feature>
<feature type="binding site" evidence="1">
    <location>
        <position position="64"/>
    </location>
    <ligand>
        <name>Cu(2+)</name>
        <dbReference type="ChEBI" id="CHEBI:29036"/>
    </ligand>
</feature>
<feature type="binding site" evidence="1">
    <location>
        <position position="133"/>
    </location>
    <ligand>
        <name>Cu(2+)</name>
        <dbReference type="ChEBI" id="CHEBI:29036"/>
    </ligand>
</feature>
<feature type="lipid moiety-binding region" description="GPI-anchor amidated asparagine" evidence="3">
    <location>
        <position position="238"/>
    </location>
</feature>
<feature type="glycosylation site" description="N-linked (GlcNAc...) asparagine" evidence="4">
    <location>
        <position position="157"/>
    </location>
</feature>
<feature type="glycosylation site" description="N-linked (GlcNAc...) asparagine" evidence="4">
    <location>
        <position position="183"/>
    </location>
</feature>
<feature type="disulfide bond" evidence="1">
    <location>
        <begin position="39"/>
        <end position="139"/>
    </location>
</feature>
<feature type="disulfide bond" evidence="1">
    <location>
        <begin position="108"/>
        <end position="155"/>
    </location>
</feature>
<keyword id="KW-1003">Cell membrane</keyword>
<keyword id="KW-0186">Copper</keyword>
<keyword id="KW-1015">Disulfide bond</keyword>
<keyword id="KW-0325">Glycoprotein</keyword>
<keyword id="KW-0336">GPI-anchor</keyword>
<keyword id="KW-0449">Lipoprotein</keyword>
<keyword id="KW-0472">Membrane</keyword>
<keyword id="KW-0479">Metal-binding</keyword>
<keyword id="KW-1185">Reference proteome</keyword>
<keyword id="KW-0732">Signal</keyword>
<accession>Q6C0J1</accession>
<name>X325_YARLI</name>
<proteinExistence type="evidence at protein level"/>
<gene>
    <name evidence="7" type="primary">X325</name>
    <name type="ORF">YALI0_F24255g</name>
</gene>